<accession>P53416</accession>
<accession>O24477</accession>
<reference key="1">
    <citation type="journal article" date="1995" name="Arch. Biochem. Biophys.">
        <title>The inducible 9, 10-dihydrophenanthrene pathway: characterization and expression of bibenzyl synthase and S-adenosylhomocysteine hydrolase.</title>
        <authorList>
            <person name="Preisig-Mueller R."/>
            <person name="Gnau P."/>
            <person name="Kindl H."/>
        </authorList>
    </citation>
    <scope>NUCLEOTIDE SEQUENCE [MRNA]</scope>
</reference>
<reference key="2">
    <citation type="online journal article" date="1997" name="Plant Gene Register">
        <title>Isolation and characterization of a cDNA encoding chalcone synthase homolog from Phalaenopsis.</title>
        <authorList>
            <person name="Hsu W.-S."/>
            <person name="Do Y.-Y."/>
            <person name="Huang P.-L."/>
        </authorList>
        <locator>PGR97-068</locator>
    </citation>
    <scope>NUCLEOTIDE SEQUENCE [MRNA]</scope>
    <source>
        <strain>cv. True Lady</strain>
        <tissue>Petal</tissue>
    </source>
</reference>
<protein>
    <recommendedName>
        <fullName>Bibenzyl synthase</fullName>
        <ecNumber>2.3.1.-</ecNumber>
    </recommendedName>
</protein>
<comment type="catalytic activity">
    <reaction>
        <text>3-(3-hydroxyphenyl)-propanoyl-CoA + 3 malonyl-CoA + 3 H(+) = 3,3',5-trihydroxybibenzyl + 4 CO2 + 4 CoA</text>
        <dbReference type="Rhea" id="RHEA:47608"/>
        <dbReference type="ChEBI" id="CHEBI:15378"/>
        <dbReference type="ChEBI" id="CHEBI:16526"/>
        <dbReference type="ChEBI" id="CHEBI:57287"/>
        <dbReference type="ChEBI" id="CHEBI:57384"/>
        <dbReference type="ChEBI" id="CHEBI:87803"/>
        <dbReference type="ChEBI" id="CHEBI:87804"/>
    </reaction>
</comment>
<comment type="similarity">
    <text evidence="2">Belongs to the thiolase-like superfamily. Chalcone/stilbene synthases family.</text>
</comment>
<sequence>MLSLESIKKAPRADGFASILAIGRANPDNIIEQSAYPDFYFRVTNSEHLVDLKKKFQRICEKTAIRKRHFVWNEEFLTANPCFSTFMDKSLNVRQEVAISEIPKLGAKAATKAIEDWGQPKSRITHLIFCTTSGMDLPGADYQLTQILGLNPNVERVMLYQQGCFAGGTTLRLAKCLAESRKGARVLVVCAETTTVLFRAPSEEHQDDLVTQALFADGASAVIVGADPDEAADERASFVIVSTSQVLLPDSAGAIGGHVSEGGLLATLHRDVPQIVSKNVGKCLEEAFTPFGISDWNSIFWVPHPGGRAILDQVEERVGLKPEKLSVSRHVLAEYGNMSSVCVHFALDEMRKRSANEGKATTGEGLEWGVLFGFGPGLTVETVVLRSVPL</sequence>
<gene>
    <name type="primary">BIBSY212</name>
    <name type="synonym">PCS1</name>
</gene>
<organism>
    <name type="scientific">Phalaenopsis sp.</name>
    <name type="common">Moth orchid</name>
    <dbReference type="NCBI Taxonomy" id="36900"/>
    <lineage>
        <taxon>Eukaryota</taxon>
        <taxon>Viridiplantae</taxon>
        <taxon>Streptophyta</taxon>
        <taxon>Embryophyta</taxon>
        <taxon>Tracheophyta</taxon>
        <taxon>Spermatophyta</taxon>
        <taxon>Magnoliopsida</taxon>
        <taxon>Liliopsida</taxon>
        <taxon>Asparagales</taxon>
        <taxon>Orchidaceae</taxon>
        <taxon>Epidendroideae</taxon>
        <taxon>Vandeae</taxon>
        <taxon>Aeridinae</taxon>
        <taxon>Phalaenopsis</taxon>
    </lineage>
</organism>
<dbReference type="EC" id="2.3.1.-"/>
<dbReference type="EMBL" id="X79903">
    <property type="protein sequence ID" value="CAA56276.1"/>
    <property type="molecule type" value="mRNA"/>
</dbReference>
<dbReference type="EMBL" id="X79904">
    <property type="protein sequence ID" value="CAA56277.1"/>
    <property type="molecule type" value="mRNA"/>
</dbReference>
<dbReference type="EMBL" id="U88077">
    <property type="protein sequence ID" value="AAB65094.1"/>
    <property type="molecule type" value="mRNA"/>
</dbReference>
<dbReference type="PIR" id="S71619">
    <property type="entry name" value="S71619"/>
</dbReference>
<dbReference type="PIR" id="S71620">
    <property type="entry name" value="S71620"/>
</dbReference>
<dbReference type="SMR" id="P53416"/>
<dbReference type="GO" id="GO:0016747">
    <property type="term" value="F:acyltransferase activity, transferring groups other than amino-acyl groups"/>
    <property type="evidence" value="ECO:0007669"/>
    <property type="project" value="InterPro"/>
</dbReference>
<dbReference type="GO" id="GO:0009813">
    <property type="term" value="P:flavonoid biosynthetic process"/>
    <property type="evidence" value="ECO:0007669"/>
    <property type="project" value="UniProtKB-KW"/>
</dbReference>
<dbReference type="GO" id="GO:0030639">
    <property type="term" value="P:polyketide biosynthetic process"/>
    <property type="evidence" value="ECO:0007669"/>
    <property type="project" value="TreeGrafter"/>
</dbReference>
<dbReference type="CDD" id="cd00831">
    <property type="entry name" value="CHS_like"/>
    <property type="match status" value="1"/>
</dbReference>
<dbReference type="FunFam" id="3.40.47.10:FF:000014">
    <property type="entry name" value="Chalcone synthase 1"/>
    <property type="match status" value="1"/>
</dbReference>
<dbReference type="FunFam" id="3.40.47.10:FF:000025">
    <property type="entry name" value="Chalcone synthase 2"/>
    <property type="match status" value="1"/>
</dbReference>
<dbReference type="Gene3D" id="3.40.47.10">
    <property type="match status" value="2"/>
</dbReference>
<dbReference type="InterPro" id="IPR012328">
    <property type="entry name" value="Chalcone/stilbene_synt_C"/>
</dbReference>
<dbReference type="InterPro" id="IPR001099">
    <property type="entry name" value="Chalcone/stilbene_synt_N"/>
</dbReference>
<dbReference type="InterPro" id="IPR018088">
    <property type="entry name" value="Chalcone/stilbene_synthase_AS"/>
</dbReference>
<dbReference type="InterPro" id="IPR011141">
    <property type="entry name" value="Polyketide_synthase_type-III"/>
</dbReference>
<dbReference type="InterPro" id="IPR016039">
    <property type="entry name" value="Thiolase-like"/>
</dbReference>
<dbReference type="PANTHER" id="PTHR11877:SF80">
    <property type="entry name" value="CHALCONE SYNTHASE 1"/>
    <property type="match status" value="1"/>
</dbReference>
<dbReference type="PANTHER" id="PTHR11877">
    <property type="entry name" value="HYDROXYMETHYLGLUTARYL-COA SYNTHASE"/>
    <property type="match status" value="1"/>
</dbReference>
<dbReference type="Pfam" id="PF02797">
    <property type="entry name" value="Chal_sti_synt_C"/>
    <property type="match status" value="1"/>
</dbReference>
<dbReference type="Pfam" id="PF00195">
    <property type="entry name" value="Chal_sti_synt_N"/>
    <property type="match status" value="1"/>
</dbReference>
<dbReference type="PIRSF" id="PIRSF000451">
    <property type="entry name" value="PKS_III"/>
    <property type="match status" value="1"/>
</dbReference>
<dbReference type="SUPFAM" id="SSF53901">
    <property type="entry name" value="Thiolase-like"/>
    <property type="match status" value="2"/>
</dbReference>
<dbReference type="PROSITE" id="PS00441">
    <property type="entry name" value="CHALCONE_SYNTH"/>
    <property type="match status" value="1"/>
</dbReference>
<name>BBS_PHASS</name>
<evidence type="ECO:0000255" key="1">
    <source>
        <dbReference type="PROSITE-ProRule" id="PRU10023"/>
    </source>
</evidence>
<evidence type="ECO:0000305" key="2"/>
<feature type="chain" id="PRO_0000216090" description="Bibenzyl synthase">
    <location>
        <begin position="1"/>
        <end position="390"/>
    </location>
</feature>
<feature type="active site" evidence="1">
    <location>
        <position position="164"/>
    </location>
</feature>
<feature type="sequence variant">
    <original>L</original>
    <variation>P</variation>
    <location>
        <position position="2"/>
    </location>
</feature>
<feature type="sequence conflict" description="In Ref. 2; AAB65094." evidence="2" ref="2">
    <original>E</original>
    <variation>D</variation>
    <location>
        <position position="5"/>
    </location>
</feature>
<feature type="sequence conflict" description="In Ref. 2; AAB65094." evidence="2" ref="2">
    <original>A</original>
    <variation>S</variation>
    <location>
        <position position="79"/>
    </location>
</feature>
<feature type="sequence conflict" description="In Ref. 2; AAB65094." evidence="2" ref="2">
    <original>S</original>
    <variation>R</variation>
    <location>
        <position position="100"/>
    </location>
</feature>
<keyword id="KW-0012">Acyltransferase</keyword>
<keyword id="KW-0284">Flavonoid biosynthesis</keyword>
<keyword id="KW-0808">Transferase</keyword>
<proteinExistence type="evidence at transcript level"/>